<name>FOLD_DICT6</name>
<organism>
    <name type="scientific">Dictyoglomus thermophilum (strain ATCC 35947 / DSM 3960 / H-6-12)</name>
    <dbReference type="NCBI Taxonomy" id="309799"/>
    <lineage>
        <taxon>Bacteria</taxon>
        <taxon>Pseudomonadati</taxon>
        <taxon>Dictyoglomota</taxon>
        <taxon>Dictyoglomia</taxon>
        <taxon>Dictyoglomales</taxon>
        <taxon>Dictyoglomaceae</taxon>
        <taxon>Dictyoglomus</taxon>
    </lineage>
</organism>
<feature type="chain" id="PRO_1000196767" description="Bifunctional protein FolD">
    <location>
        <begin position="1"/>
        <end position="283"/>
    </location>
</feature>
<feature type="binding site" evidence="1">
    <location>
        <begin position="164"/>
        <end position="166"/>
    </location>
    <ligand>
        <name>NADP(+)</name>
        <dbReference type="ChEBI" id="CHEBI:58349"/>
    </ligand>
</feature>
<feature type="binding site" evidence="1">
    <location>
        <position position="189"/>
    </location>
    <ligand>
        <name>NADP(+)</name>
        <dbReference type="ChEBI" id="CHEBI:58349"/>
    </ligand>
</feature>
<feature type="binding site" evidence="1">
    <location>
        <position position="230"/>
    </location>
    <ligand>
        <name>NADP(+)</name>
        <dbReference type="ChEBI" id="CHEBI:58349"/>
    </ligand>
</feature>
<accession>B5YA73</accession>
<protein>
    <recommendedName>
        <fullName evidence="1">Bifunctional protein FolD</fullName>
    </recommendedName>
    <domain>
        <recommendedName>
            <fullName evidence="1">Methylenetetrahydrofolate dehydrogenase</fullName>
            <ecNumber evidence="1">1.5.1.5</ecNumber>
        </recommendedName>
    </domain>
    <domain>
        <recommendedName>
            <fullName evidence="1">Methenyltetrahydrofolate cyclohydrolase</fullName>
            <ecNumber evidence="1">3.5.4.9</ecNumber>
        </recommendedName>
    </domain>
</protein>
<dbReference type="EC" id="1.5.1.5" evidence="1"/>
<dbReference type="EC" id="3.5.4.9" evidence="1"/>
<dbReference type="EMBL" id="CP001146">
    <property type="protein sequence ID" value="ACI18800.1"/>
    <property type="molecule type" value="Genomic_DNA"/>
</dbReference>
<dbReference type="RefSeq" id="WP_012547432.1">
    <property type="nucleotide sequence ID" value="NC_011297.1"/>
</dbReference>
<dbReference type="SMR" id="B5YA73"/>
<dbReference type="STRING" id="309799.DICTH_1526"/>
<dbReference type="PaxDb" id="309799-DICTH_1526"/>
<dbReference type="KEGG" id="dth:DICTH_1526"/>
<dbReference type="eggNOG" id="COG0190">
    <property type="taxonomic scope" value="Bacteria"/>
</dbReference>
<dbReference type="HOGENOM" id="CLU_034045_2_1_0"/>
<dbReference type="OrthoDB" id="9803580at2"/>
<dbReference type="UniPathway" id="UPA00193"/>
<dbReference type="Proteomes" id="UP000001733">
    <property type="component" value="Chromosome"/>
</dbReference>
<dbReference type="GO" id="GO:0005829">
    <property type="term" value="C:cytosol"/>
    <property type="evidence" value="ECO:0007669"/>
    <property type="project" value="TreeGrafter"/>
</dbReference>
<dbReference type="GO" id="GO:0004477">
    <property type="term" value="F:methenyltetrahydrofolate cyclohydrolase activity"/>
    <property type="evidence" value="ECO:0007669"/>
    <property type="project" value="UniProtKB-UniRule"/>
</dbReference>
<dbReference type="GO" id="GO:0004488">
    <property type="term" value="F:methylenetetrahydrofolate dehydrogenase (NADP+) activity"/>
    <property type="evidence" value="ECO:0007669"/>
    <property type="project" value="UniProtKB-UniRule"/>
</dbReference>
<dbReference type="GO" id="GO:0000105">
    <property type="term" value="P:L-histidine biosynthetic process"/>
    <property type="evidence" value="ECO:0007669"/>
    <property type="project" value="UniProtKB-KW"/>
</dbReference>
<dbReference type="GO" id="GO:0009086">
    <property type="term" value="P:methionine biosynthetic process"/>
    <property type="evidence" value="ECO:0007669"/>
    <property type="project" value="UniProtKB-KW"/>
</dbReference>
<dbReference type="GO" id="GO:0006164">
    <property type="term" value="P:purine nucleotide biosynthetic process"/>
    <property type="evidence" value="ECO:0007669"/>
    <property type="project" value="UniProtKB-KW"/>
</dbReference>
<dbReference type="GO" id="GO:0035999">
    <property type="term" value="P:tetrahydrofolate interconversion"/>
    <property type="evidence" value="ECO:0007669"/>
    <property type="project" value="UniProtKB-UniRule"/>
</dbReference>
<dbReference type="CDD" id="cd01080">
    <property type="entry name" value="NAD_bind_m-THF_DH_Cyclohyd"/>
    <property type="match status" value="1"/>
</dbReference>
<dbReference type="FunFam" id="3.40.50.720:FF:000094">
    <property type="entry name" value="Bifunctional protein FolD"/>
    <property type="match status" value="1"/>
</dbReference>
<dbReference type="Gene3D" id="3.40.50.10860">
    <property type="entry name" value="Leucine Dehydrogenase, chain A, domain 1"/>
    <property type="match status" value="1"/>
</dbReference>
<dbReference type="Gene3D" id="3.40.50.720">
    <property type="entry name" value="NAD(P)-binding Rossmann-like Domain"/>
    <property type="match status" value="1"/>
</dbReference>
<dbReference type="HAMAP" id="MF_01576">
    <property type="entry name" value="THF_DHG_CYH"/>
    <property type="match status" value="1"/>
</dbReference>
<dbReference type="InterPro" id="IPR046346">
    <property type="entry name" value="Aminoacid_DH-like_N_sf"/>
</dbReference>
<dbReference type="InterPro" id="IPR036291">
    <property type="entry name" value="NAD(P)-bd_dom_sf"/>
</dbReference>
<dbReference type="InterPro" id="IPR000672">
    <property type="entry name" value="THF_DH/CycHdrlase"/>
</dbReference>
<dbReference type="InterPro" id="IPR020630">
    <property type="entry name" value="THF_DH/CycHdrlase_cat_dom"/>
</dbReference>
<dbReference type="InterPro" id="IPR020631">
    <property type="entry name" value="THF_DH/CycHdrlase_NAD-bd_dom"/>
</dbReference>
<dbReference type="PANTHER" id="PTHR48099:SF5">
    <property type="entry name" value="C-1-TETRAHYDROFOLATE SYNTHASE, CYTOPLASMIC"/>
    <property type="match status" value="1"/>
</dbReference>
<dbReference type="PANTHER" id="PTHR48099">
    <property type="entry name" value="C-1-TETRAHYDROFOLATE SYNTHASE, CYTOPLASMIC-RELATED"/>
    <property type="match status" value="1"/>
</dbReference>
<dbReference type="Pfam" id="PF00763">
    <property type="entry name" value="THF_DHG_CYH"/>
    <property type="match status" value="1"/>
</dbReference>
<dbReference type="Pfam" id="PF02882">
    <property type="entry name" value="THF_DHG_CYH_C"/>
    <property type="match status" value="1"/>
</dbReference>
<dbReference type="PRINTS" id="PR00085">
    <property type="entry name" value="THFDHDRGNASE"/>
</dbReference>
<dbReference type="SUPFAM" id="SSF53223">
    <property type="entry name" value="Aminoacid dehydrogenase-like, N-terminal domain"/>
    <property type="match status" value="1"/>
</dbReference>
<dbReference type="SUPFAM" id="SSF51735">
    <property type="entry name" value="NAD(P)-binding Rossmann-fold domains"/>
    <property type="match status" value="1"/>
</dbReference>
<proteinExistence type="inferred from homology"/>
<comment type="function">
    <text evidence="1">Catalyzes the oxidation of 5,10-methylenetetrahydrofolate to 5,10-methenyltetrahydrofolate and then the hydrolysis of 5,10-methenyltetrahydrofolate to 10-formyltetrahydrofolate.</text>
</comment>
<comment type="catalytic activity">
    <reaction evidence="1">
        <text>(6R)-5,10-methylene-5,6,7,8-tetrahydrofolate + NADP(+) = (6R)-5,10-methenyltetrahydrofolate + NADPH</text>
        <dbReference type="Rhea" id="RHEA:22812"/>
        <dbReference type="ChEBI" id="CHEBI:15636"/>
        <dbReference type="ChEBI" id="CHEBI:57455"/>
        <dbReference type="ChEBI" id="CHEBI:57783"/>
        <dbReference type="ChEBI" id="CHEBI:58349"/>
        <dbReference type="EC" id="1.5.1.5"/>
    </reaction>
</comment>
<comment type="catalytic activity">
    <reaction evidence="1">
        <text>(6R)-5,10-methenyltetrahydrofolate + H2O = (6R)-10-formyltetrahydrofolate + H(+)</text>
        <dbReference type="Rhea" id="RHEA:23700"/>
        <dbReference type="ChEBI" id="CHEBI:15377"/>
        <dbReference type="ChEBI" id="CHEBI:15378"/>
        <dbReference type="ChEBI" id="CHEBI:57455"/>
        <dbReference type="ChEBI" id="CHEBI:195366"/>
        <dbReference type="EC" id="3.5.4.9"/>
    </reaction>
</comment>
<comment type="pathway">
    <text evidence="1">One-carbon metabolism; tetrahydrofolate interconversion.</text>
</comment>
<comment type="subunit">
    <text evidence="1">Homodimer.</text>
</comment>
<comment type="similarity">
    <text evidence="1">Belongs to the tetrahydrofolate dehydrogenase/cyclohydrolase family.</text>
</comment>
<evidence type="ECO:0000255" key="1">
    <source>
        <dbReference type="HAMAP-Rule" id="MF_01576"/>
    </source>
</evidence>
<gene>
    <name evidence="1" type="primary">folD</name>
    <name type="ordered locus">DICTH_1526</name>
</gene>
<reference key="1">
    <citation type="journal article" date="2014" name="Genome Announc.">
        <title>Complete Genome Sequence of the Extreme Thermophile Dictyoglomus thermophilum H-6-12.</title>
        <authorList>
            <person name="Coil D.A."/>
            <person name="Badger J.H."/>
            <person name="Forberger H.C."/>
            <person name="Riggs F."/>
            <person name="Madupu R."/>
            <person name="Fedorova N."/>
            <person name="Ward N."/>
            <person name="Robb F.T."/>
            <person name="Eisen J.A."/>
        </authorList>
    </citation>
    <scope>NUCLEOTIDE SEQUENCE [LARGE SCALE GENOMIC DNA]</scope>
    <source>
        <strain>ATCC 35947 / DSM 3960 / H-6-12</strain>
    </source>
</reference>
<keyword id="KW-0028">Amino-acid biosynthesis</keyword>
<keyword id="KW-0368">Histidine biosynthesis</keyword>
<keyword id="KW-0378">Hydrolase</keyword>
<keyword id="KW-0486">Methionine biosynthesis</keyword>
<keyword id="KW-0511">Multifunctional enzyme</keyword>
<keyword id="KW-0521">NADP</keyword>
<keyword id="KW-0554">One-carbon metabolism</keyword>
<keyword id="KW-0560">Oxidoreductase</keyword>
<keyword id="KW-0658">Purine biosynthesis</keyword>
<sequence length="283" mass="31535">MGVILEGKPVAEKLEKEIKEKIEIYKTKGIIPNLCIVKVGENEEAEAYAKSIERFFSRIGINVERKNFAENVSLLEFQKALKELEKNNKVHGILILRPLSEELERQKAFRFLSPDKDVEGITYENLGKLFVGEKCFHPCTPQAVIELLDFYKISVEGKDVVVVGRSISVGKPLSILLLNRNATVTICHSKTKNLEELTRRAEVLVAAVGRPHFIGKDMVKEGQVVIDIGTNVVEGKLVGDVNFEEVKDKVGYITPVPGGIGIITTRVLAMNLLKAVEKNEARN</sequence>